<feature type="chain" id="PRO_0000108988" description="UDP-N-acetylmuramoylalanine--D-glutamate ligase">
    <location>
        <begin position="1"/>
        <end position="504"/>
    </location>
</feature>
<feature type="binding site" evidence="1">
    <location>
        <begin position="129"/>
        <end position="135"/>
    </location>
    <ligand>
        <name>ATP</name>
        <dbReference type="ChEBI" id="CHEBI:30616"/>
    </ligand>
</feature>
<evidence type="ECO:0000255" key="1">
    <source>
        <dbReference type="HAMAP-Rule" id="MF_00639"/>
    </source>
</evidence>
<evidence type="ECO:0000305" key="2"/>
<proteinExistence type="inferred from homology"/>
<comment type="function">
    <text evidence="1">Cell wall formation. Catalyzes the addition of glutamate to the nucleotide precursor UDP-N-acetylmuramoyl-L-alanine (UMA).</text>
</comment>
<comment type="catalytic activity">
    <reaction evidence="1">
        <text>UDP-N-acetyl-alpha-D-muramoyl-L-alanine + D-glutamate + ATP = UDP-N-acetyl-alpha-D-muramoyl-L-alanyl-D-glutamate + ADP + phosphate + H(+)</text>
        <dbReference type="Rhea" id="RHEA:16429"/>
        <dbReference type="ChEBI" id="CHEBI:15378"/>
        <dbReference type="ChEBI" id="CHEBI:29986"/>
        <dbReference type="ChEBI" id="CHEBI:30616"/>
        <dbReference type="ChEBI" id="CHEBI:43474"/>
        <dbReference type="ChEBI" id="CHEBI:83898"/>
        <dbReference type="ChEBI" id="CHEBI:83900"/>
        <dbReference type="ChEBI" id="CHEBI:456216"/>
        <dbReference type="EC" id="6.3.2.9"/>
    </reaction>
</comment>
<comment type="pathway">
    <text evidence="1">Cell wall biogenesis; peptidoglycan biosynthesis.</text>
</comment>
<comment type="subcellular location">
    <subcellularLocation>
        <location evidence="1">Cytoplasm</location>
    </subcellularLocation>
</comment>
<comment type="similarity">
    <text evidence="1">Belongs to the MurCDEF family.</text>
</comment>
<comment type="sequence caution" evidence="2">
    <conflict type="erroneous initiation">
        <sequence resource="EMBL-CDS" id="CAH37039"/>
    </conflict>
</comment>
<organism>
    <name type="scientific">Burkholderia pseudomallei (strain K96243)</name>
    <dbReference type="NCBI Taxonomy" id="272560"/>
    <lineage>
        <taxon>Bacteria</taxon>
        <taxon>Pseudomonadati</taxon>
        <taxon>Pseudomonadota</taxon>
        <taxon>Betaproteobacteria</taxon>
        <taxon>Burkholderiales</taxon>
        <taxon>Burkholderiaceae</taxon>
        <taxon>Burkholderia</taxon>
        <taxon>pseudomallei group</taxon>
    </lineage>
</organism>
<accession>Q63QJ5</accession>
<sequence length="504" mass="52549">MFGDRQRPMVLVLGLGESGLAIARWCARHGCRLRVADTRETPPNLAALTAAGVDFEFVGGAFSPALVDGGIELVALSPGLSPLAEDLAPLVAAARERGIPVWGELEFFAQALAALGANGYAPKVIAITGTNGKTTTTSLAGLLCERAGKKVAVAGNISPAMLDKLTEAIDAAALPDVWVLELSSFQLDTAHTFAPDAATILNITQDHLDWHGGFAAYAAAKGRVFGPRTVRVLNRDDAEVMRFAPPAAAADAPRAVTFGLNEPAADGDYGLLRENGIAWLVEAIDRDGADAPAAPSRRRKQEAANPPDIALKRLMPADALRIRGLHNAANALAAYALARAIGLPAAPLLHGLREYRGEPHRVEVIATLDGVDYVDDSKGTNVGATVAALDGLAQRAVLIAGGDGKGQDFEPLAAPVARWCRAVMLIGRDAPALREALADTGVPLADHATLEAAVRAASALAQPGDAVLLSPACASLDMFRNYAHRADVFRSAVEDIALEKGTTL</sequence>
<dbReference type="EC" id="6.3.2.9" evidence="1"/>
<dbReference type="EMBL" id="BX571965">
    <property type="protein sequence ID" value="CAH37039.1"/>
    <property type="status" value="ALT_INIT"/>
    <property type="molecule type" value="Genomic_DNA"/>
</dbReference>
<dbReference type="RefSeq" id="WP_004203798.1">
    <property type="nucleotide sequence ID" value="NZ_CP009538.1"/>
</dbReference>
<dbReference type="RefSeq" id="YP_109623.2">
    <property type="nucleotide sequence ID" value="NC_006350.1"/>
</dbReference>
<dbReference type="SMR" id="Q63QJ5"/>
<dbReference type="STRING" id="272560.BPSL3027"/>
<dbReference type="GeneID" id="93061629"/>
<dbReference type="KEGG" id="bps:BPSL3027"/>
<dbReference type="PATRIC" id="fig|272560.51.peg.2239"/>
<dbReference type="eggNOG" id="COG0771">
    <property type="taxonomic scope" value="Bacteria"/>
</dbReference>
<dbReference type="UniPathway" id="UPA00219"/>
<dbReference type="Proteomes" id="UP000000605">
    <property type="component" value="Chromosome 1"/>
</dbReference>
<dbReference type="GO" id="GO:0005737">
    <property type="term" value="C:cytoplasm"/>
    <property type="evidence" value="ECO:0007669"/>
    <property type="project" value="UniProtKB-SubCell"/>
</dbReference>
<dbReference type="GO" id="GO:0005524">
    <property type="term" value="F:ATP binding"/>
    <property type="evidence" value="ECO:0007669"/>
    <property type="project" value="UniProtKB-UniRule"/>
</dbReference>
<dbReference type="GO" id="GO:0008764">
    <property type="term" value="F:UDP-N-acetylmuramoylalanine-D-glutamate ligase activity"/>
    <property type="evidence" value="ECO:0007669"/>
    <property type="project" value="UniProtKB-UniRule"/>
</dbReference>
<dbReference type="GO" id="GO:0051301">
    <property type="term" value="P:cell division"/>
    <property type="evidence" value="ECO:0007669"/>
    <property type="project" value="UniProtKB-KW"/>
</dbReference>
<dbReference type="GO" id="GO:0071555">
    <property type="term" value="P:cell wall organization"/>
    <property type="evidence" value="ECO:0007669"/>
    <property type="project" value="UniProtKB-KW"/>
</dbReference>
<dbReference type="GO" id="GO:0009252">
    <property type="term" value="P:peptidoglycan biosynthetic process"/>
    <property type="evidence" value="ECO:0007669"/>
    <property type="project" value="UniProtKB-UniRule"/>
</dbReference>
<dbReference type="GO" id="GO:0008360">
    <property type="term" value="P:regulation of cell shape"/>
    <property type="evidence" value="ECO:0007669"/>
    <property type="project" value="UniProtKB-KW"/>
</dbReference>
<dbReference type="Gene3D" id="3.90.190.20">
    <property type="entry name" value="Mur ligase, C-terminal domain"/>
    <property type="match status" value="1"/>
</dbReference>
<dbReference type="Gene3D" id="3.40.1190.10">
    <property type="entry name" value="Mur-like, catalytic domain"/>
    <property type="match status" value="1"/>
</dbReference>
<dbReference type="Gene3D" id="3.40.50.720">
    <property type="entry name" value="NAD(P)-binding Rossmann-like Domain"/>
    <property type="match status" value="1"/>
</dbReference>
<dbReference type="HAMAP" id="MF_00639">
    <property type="entry name" value="MurD"/>
    <property type="match status" value="1"/>
</dbReference>
<dbReference type="InterPro" id="IPR036565">
    <property type="entry name" value="Mur-like_cat_sf"/>
</dbReference>
<dbReference type="InterPro" id="IPR004101">
    <property type="entry name" value="Mur_ligase_C"/>
</dbReference>
<dbReference type="InterPro" id="IPR036615">
    <property type="entry name" value="Mur_ligase_C_dom_sf"/>
</dbReference>
<dbReference type="InterPro" id="IPR013221">
    <property type="entry name" value="Mur_ligase_cen"/>
</dbReference>
<dbReference type="InterPro" id="IPR005762">
    <property type="entry name" value="MurD"/>
</dbReference>
<dbReference type="NCBIfam" id="TIGR01087">
    <property type="entry name" value="murD"/>
    <property type="match status" value="1"/>
</dbReference>
<dbReference type="PANTHER" id="PTHR43692">
    <property type="entry name" value="UDP-N-ACETYLMURAMOYLALANINE--D-GLUTAMATE LIGASE"/>
    <property type="match status" value="1"/>
</dbReference>
<dbReference type="PANTHER" id="PTHR43692:SF1">
    <property type="entry name" value="UDP-N-ACETYLMURAMOYLALANINE--D-GLUTAMATE LIGASE"/>
    <property type="match status" value="1"/>
</dbReference>
<dbReference type="Pfam" id="PF02875">
    <property type="entry name" value="Mur_ligase_C"/>
    <property type="match status" value="1"/>
</dbReference>
<dbReference type="Pfam" id="PF08245">
    <property type="entry name" value="Mur_ligase_M"/>
    <property type="match status" value="1"/>
</dbReference>
<dbReference type="Pfam" id="PF21799">
    <property type="entry name" value="MurD-like_N"/>
    <property type="match status" value="1"/>
</dbReference>
<dbReference type="SUPFAM" id="SSF51984">
    <property type="entry name" value="MurCD N-terminal domain"/>
    <property type="match status" value="1"/>
</dbReference>
<dbReference type="SUPFAM" id="SSF53623">
    <property type="entry name" value="MurD-like peptide ligases, catalytic domain"/>
    <property type="match status" value="1"/>
</dbReference>
<dbReference type="SUPFAM" id="SSF53244">
    <property type="entry name" value="MurD-like peptide ligases, peptide-binding domain"/>
    <property type="match status" value="1"/>
</dbReference>
<reference key="1">
    <citation type="journal article" date="2004" name="Proc. Natl. Acad. Sci. U.S.A.">
        <title>Genomic plasticity of the causative agent of melioidosis, Burkholderia pseudomallei.</title>
        <authorList>
            <person name="Holden M.T.G."/>
            <person name="Titball R.W."/>
            <person name="Peacock S.J."/>
            <person name="Cerdeno-Tarraga A.-M."/>
            <person name="Atkins T."/>
            <person name="Crossman L.C."/>
            <person name="Pitt T."/>
            <person name="Churcher C."/>
            <person name="Mungall K.L."/>
            <person name="Bentley S.D."/>
            <person name="Sebaihia M."/>
            <person name="Thomson N.R."/>
            <person name="Bason N."/>
            <person name="Beacham I.R."/>
            <person name="Brooks K."/>
            <person name="Brown K.A."/>
            <person name="Brown N.F."/>
            <person name="Challis G.L."/>
            <person name="Cherevach I."/>
            <person name="Chillingworth T."/>
            <person name="Cronin A."/>
            <person name="Crossett B."/>
            <person name="Davis P."/>
            <person name="DeShazer D."/>
            <person name="Feltwell T."/>
            <person name="Fraser A."/>
            <person name="Hance Z."/>
            <person name="Hauser H."/>
            <person name="Holroyd S."/>
            <person name="Jagels K."/>
            <person name="Keith K.E."/>
            <person name="Maddison M."/>
            <person name="Moule S."/>
            <person name="Price C."/>
            <person name="Quail M.A."/>
            <person name="Rabbinowitsch E."/>
            <person name="Rutherford K."/>
            <person name="Sanders M."/>
            <person name="Simmonds M."/>
            <person name="Songsivilai S."/>
            <person name="Stevens K."/>
            <person name="Tumapa S."/>
            <person name="Vesaratchavest M."/>
            <person name="Whitehead S."/>
            <person name="Yeats C."/>
            <person name="Barrell B.G."/>
            <person name="Oyston P.C.F."/>
            <person name="Parkhill J."/>
        </authorList>
    </citation>
    <scope>NUCLEOTIDE SEQUENCE [LARGE SCALE GENOMIC DNA]</scope>
    <source>
        <strain>K96243</strain>
    </source>
</reference>
<gene>
    <name evidence="1" type="primary">murD</name>
    <name type="ordered locus">BPSL3027</name>
</gene>
<protein>
    <recommendedName>
        <fullName evidence="1">UDP-N-acetylmuramoylalanine--D-glutamate ligase</fullName>
        <ecNumber evidence="1">6.3.2.9</ecNumber>
    </recommendedName>
    <alternativeName>
        <fullName evidence="1">D-glutamic acid-adding enzyme</fullName>
    </alternativeName>
    <alternativeName>
        <fullName evidence="1">UDP-N-acetylmuramoyl-L-alanyl-D-glutamate synthetase</fullName>
    </alternativeName>
</protein>
<keyword id="KW-0067">ATP-binding</keyword>
<keyword id="KW-0131">Cell cycle</keyword>
<keyword id="KW-0132">Cell division</keyword>
<keyword id="KW-0133">Cell shape</keyword>
<keyword id="KW-0961">Cell wall biogenesis/degradation</keyword>
<keyword id="KW-0963">Cytoplasm</keyword>
<keyword id="KW-0436">Ligase</keyword>
<keyword id="KW-0547">Nucleotide-binding</keyword>
<keyword id="KW-0573">Peptidoglycan synthesis</keyword>
<keyword id="KW-1185">Reference proteome</keyword>
<name>MURD_BURPS</name>